<proteinExistence type="inferred from homology"/>
<accession>Q8RH57</accession>
<comment type="function">
    <text evidence="1">Catalyzes the attachment of tyrosine to tRNA(Tyr) in a two-step reaction: tyrosine is first activated by ATP to form Tyr-AMP and then transferred to the acceptor end of tRNA(Tyr).</text>
</comment>
<comment type="catalytic activity">
    <reaction evidence="1">
        <text>tRNA(Tyr) + L-tyrosine + ATP = L-tyrosyl-tRNA(Tyr) + AMP + diphosphate + H(+)</text>
        <dbReference type="Rhea" id="RHEA:10220"/>
        <dbReference type="Rhea" id="RHEA-COMP:9706"/>
        <dbReference type="Rhea" id="RHEA-COMP:9707"/>
        <dbReference type="ChEBI" id="CHEBI:15378"/>
        <dbReference type="ChEBI" id="CHEBI:30616"/>
        <dbReference type="ChEBI" id="CHEBI:33019"/>
        <dbReference type="ChEBI" id="CHEBI:58315"/>
        <dbReference type="ChEBI" id="CHEBI:78442"/>
        <dbReference type="ChEBI" id="CHEBI:78536"/>
        <dbReference type="ChEBI" id="CHEBI:456215"/>
        <dbReference type="EC" id="6.1.1.1"/>
    </reaction>
</comment>
<comment type="subunit">
    <text evidence="1">Homodimer.</text>
</comment>
<comment type="subcellular location">
    <subcellularLocation>
        <location evidence="1">Cytoplasm</location>
    </subcellularLocation>
</comment>
<comment type="similarity">
    <text evidence="1">Belongs to the class-I aminoacyl-tRNA synthetase family. TyrS type 1 subfamily.</text>
</comment>
<dbReference type="EC" id="6.1.1.1" evidence="1"/>
<dbReference type="EMBL" id="AE009951">
    <property type="protein sequence ID" value="AAL94267.1"/>
    <property type="molecule type" value="Genomic_DNA"/>
</dbReference>
<dbReference type="RefSeq" id="NP_602968.1">
    <property type="nucleotide sequence ID" value="NC_003454.1"/>
</dbReference>
<dbReference type="SMR" id="Q8RH57"/>
<dbReference type="FunCoup" id="Q8RH57">
    <property type="interactions" value="333"/>
</dbReference>
<dbReference type="STRING" id="190304.FN0054"/>
<dbReference type="PaxDb" id="190304-FN0054"/>
<dbReference type="EnsemblBacteria" id="AAL94267">
    <property type="protein sequence ID" value="AAL94267"/>
    <property type="gene ID" value="FN0054"/>
</dbReference>
<dbReference type="KEGG" id="fnu:FN0054"/>
<dbReference type="PATRIC" id="fig|190304.8.peg.646"/>
<dbReference type="eggNOG" id="COG0162">
    <property type="taxonomic scope" value="Bacteria"/>
</dbReference>
<dbReference type="HOGENOM" id="CLU_024003_0_3_0"/>
<dbReference type="InParanoid" id="Q8RH57"/>
<dbReference type="BioCyc" id="FNUC190304:G1FZS-667-MONOMER"/>
<dbReference type="Proteomes" id="UP000002521">
    <property type="component" value="Chromosome"/>
</dbReference>
<dbReference type="GO" id="GO:0005829">
    <property type="term" value="C:cytosol"/>
    <property type="evidence" value="ECO:0000318"/>
    <property type="project" value="GO_Central"/>
</dbReference>
<dbReference type="GO" id="GO:0005524">
    <property type="term" value="F:ATP binding"/>
    <property type="evidence" value="ECO:0007669"/>
    <property type="project" value="UniProtKB-UniRule"/>
</dbReference>
<dbReference type="GO" id="GO:0003723">
    <property type="term" value="F:RNA binding"/>
    <property type="evidence" value="ECO:0007669"/>
    <property type="project" value="UniProtKB-KW"/>
</dbReference>
<dbReference type="GO" id="GO:0004831">
    <property type="term" value="F:tyrosine-tRNA ligase activity"/>
    <property type="evidence" value="ECO:0000318"/>
    <property type="project" value="GO_Central"/>
</dbReference>
<dbReference type="GO" id="GO:0043039">
    <property type="term" value="P:tRNA aminoacylation"/>
    <property type="evidence" value="ECO:0000318"/>
    <property type="project" value="GO_Central"/>
</dbReference>
<dbReference type="GO" id="GO:0006437">
    <property type="term" value="P:tyrosyl-tRNA aminoacylation"/>
    <property type="evidence" value="ECO:0007669"/>
    <property type="project" value="UniProtKB-UniRule"/>
</dbReference>
<dbReference type="CDD" id="cd00165">
    <property type="entry name" value="S4"/>
    <property type="match status" value="1"/>
</dbReference>
<dbReference type="CDD" id="cd00805">
    <property type="entry name" value="TyrRS_core"/>
    <property type="match status" value="1"/>
</dbReference>
<dbReference type="FunFam" id="1.10.240.10:FF:000001">
    <property type="entry name" value="Tyrosine--tRNA ligase"/>
    <property type="match status" value="1"/>
</dbReference>
<dbReference type="FunFam" id="3.10.290.10:FF:000022">
    <property type="entry name" value="Tyrosine--tRNA ligase"/>
    <property type="match status" value="1"/>
</dbReference>
<dbReference type="FunFam" id="3.40.50.620:FF:000008">
    <property type="entry name" value="Tyrosine--tRNA ligase"/>
    <property type="match status" value="1"/>
</dbReference>
<dbReference type="Gene3D" id="3.40.50.620">
    <property type="entry name" value="HUPs"/>
    <property type="match status" value="1"/>
</dbReference>
<dbReference type="Gene3D" id="3.10.290.10">
    <property type="entry name" value="RNA-binding S4 domain"/>
    <property type="match status" value="1"/>
</dbReference>
<dbReference type="Gene3D" id="1.10.240.10">
    <property type="entry name" value="Tyrosyl-Transfer RNA Synthetase"/>
    <property type="match status" value="1"/>
</dbReference>
<dbReference type="HAMAP" id="MF_02006">
    <property type="entry name" value="Tyr_tRNA_synth_type1"/>
    <property type="match status" value="1"/>
</dbReference>
<dbReference type="InterPro" id="IPR001412">
    <property type="entry name" value="aa-tRNA-synth_I_CS"/>
</dbReference>
<dbReference type="InterPro" id="IPR002305">
    <property type="entry name" value="aa-tRNA-synth_Ic"/>
</dbReference>
<dbReference type="InterPro" id="IPR014729">
    <property type="entry name" value="Rossmann-like_a/b/a_fold"/>
</dbReference>
<dbReference type="InterPro" id="IPR036986">
    <property type="entry name" value="S4_RNA-bd_sf"/>
</dbReference>
<dbReference type="InterPro" id="IPR054608">
    <property type="entry name" value="SYY-like_C"/>
</dbReference>
<dbReference type="InterPro" id="IPR002307">
    <property type="entry name" value="Tyr-tRNA-ligase"/>
</dbReference>
<dbReference type="InterPro" id="IPR024088">
    <property type="entry name" value="Tyr-tRNA-ligase_bac-type"/>
</dbReference>
<dbReference type="InterPro" id="IPR024107">
    <property type="entry name" value="Tyr-tRNA-ligase_bac_1"/>
</dbReference>
<dbReference type="NCBIfam" id="TIGR00234">
    <property type="entry name" value="tyrS"/>
    <property type="match status" value="1"/>
</dbReference>
<dbReference type="PANTHER" id="PTHR11766:SF0">
    <property type="entry name" value="TYROSINE--TRNA LIGASE, MITOCHONDRIAL"/>
    <property type="match status" value="1"/>
</dbReference>
<dbReference type="PANTHER" id="PTHR11766">
    <property type="entry name" value="TYROSYL-TRNA SYNTHETASE"/>
    <property type="match status" value="1"/>
</dbReference>
<dbReference type="Pfam" id="PF22421">
    <property type="entry name" value="SYY_C-terminal"/>
    <property type="match status" value="1"/>
</dbReference>
<dbReference type="Pfam" id="PF00579">
    <property type="entry name" value="tRNA-synt_1b"/>
    <property type="match status" value="1"/>
</dbReference>
<dbReference type="PRINTS" id="PR01040">
    <property type="entry name" value="TRNASYNTHTYR"/>
</dbReference>
<dbReference type="SUPFAM" id="SSF55174">
    <property type="entry name" value="Alpha-L RNA-binding motif"/>
    <property type="match status" value="1"/>
</dbReference>
<dbReference type="SUPFAM" id="SSF52374">
    <property type="entry name" value="Nucleotidylyl transferase"/>
    <property type="match status" value="1"/>
</dbReference>
<dbReference type="PROSITE" id="PS00178">
    <property type="entry name" value="AA_TRNA_LIGASE_I"/>
    <property type="match status" value="1"/>
</dbReference>
<dbReference type="PROSITE" id="PS50889">
    <property type="entry name" value="S4"/>
    <property type="match status" value="1"/>
</dbReference>
<name>SYY_FUSNN</name>
<evidence type="ECO:0000255" key="1">
    <source>
        <dbReference type="HAMAP-Rule" id="MF_02006"/>
    </source>
</evidence>
<sequence>MEGKMANVYDVLKERGYLKQLTHEEEIREILGKEKVTFYIGFDPTADSLHVGHFIAMMFMAHMQQHGHRPIALAGGGTGMIGDPSGRSDMRTMMTVEMIDHNVECIKKQMQKFIDFSEDKAILANNADWLRNLNYIEFLRDVGEHFSVNRMLAAECYKSRMENGLSFLEFNYMIMQAYDFYILNHKYNCTMQLGGDDQWSNMIAGVELLRRKDRKPAYAMTCTLLTNSEGKKMGKTAKGALWLDPEKTTPYEFYQYWRNIDDQDVEKCLALLTFLPMDEVRRLGALKDAEINEAKKVLAYEVTKIIHGEEEATKAKEATEALFGSGNNLDNAPKIEVTDEDFSKELLDVLVDRKIIKTKSEGRRLIEQNGMSLNDEKIKDVKFTLNDNTLGLLKLGKKKFYNIVKK</sequence>
<protein>
    <recommendedName>
        <fullName evidence="1">Tyrosine--tRNA ligase</fullName>
        <ecNumber evidence="1">6.1.1.1</ecNumber>
    </recommendedName>
    <alternativeName>
        <fullName evidence="1">Tyrosyl-tRNA synthetase</fullName>
        <shortName evidence="1">TyrRS</shortName>
    </alternativeName>
</protein>
<gene>
    <name evidence="1" type="primary">tyrS</name>
    <name type="ordered locus">FN0054</name>
</gene>
<keyword id="KW-0030">Aminoacyl-tRNA synthetase</keyword>
<keyword id="KW-0067">ATP-binding</keyword>
<keyword id="KW-0963">Cytoplasm</keyword>
<keyword id="KW-0436">Ligase</keyword>
<keyword id="KW-0547">Nucleotide-binding</keyword>
<keyword id="KW-0648">Protein biosynthesis</keyword>
<keyword id="KW-1185">Reference proteome</keyword>
<keyword id="KW-0694">RNA-binding</keyword>
<feature type="chain" id="PRO_0000234712" description="Tyrosine--tRNA ligase">
    <location>
        <begin position="1"/>
        <end position="406"/>
    </location>
</feature>
<feature type="domain" description="S4 RNA-binding" evidence="1">
    <location>
        <begin position="344"/>
        <end position="404"/>
    </location>
</feature>
<feature type="short sequence motif" description="'HIGH' region">
    <location>
        <begin position="44"/>
        <end position="53"/>
    </location>
</feature>
<feature type="short sequence motif" description="'KMSKS' region">
    <location>
        <begin position="232"/>
        <end position="236"/>
    </location>
</feature>
<feature type="binding site" evidence="1">
    <location>
        <position position="39"/>
    </location>
    <ligand>
        <name>L-tyrosine</name>
        <dbReference type="ChEBI" id="CHEBI:58315"/>
    </ligand>
</feature>
<feature type="binding site" evidence="1">
    <location>
        <position position="172"/>
    </location>
    <ligand>
        <name>L-tyrosine</name>
        <dbReference type="ChEBI" id="CHEBI:58315"/>
    </ligand>
</feature>
<feature type="binding site" evidence="1">
    <location>
        <position position="176"/>
    </location>
    <ligand>
        <name>L-tyrosine</name>
        <dbReference type="ChEBI" id="CHEBI:58315"/>
    </ligand>
</feature>
<feature type="binding site" evidence="1">
    <location>
        <position position="235"/>
    </location>
    <ligand>
        <name>ATP</name>
        <dbReference type="ChEBI" id="CHEBI:30616"/>
    </ligand>
</feature>
<organism>
    <name type="scientific">Fusobacterium nucleatum subsp. nucleatum (strain ATCC 25586 / DSM 15643 / BCRC 10681 / CIP 101130 / JCM 8532 / KCTC 2640 / LMG 13131 / VPI 4355)</name>
    <dbReference type="NCBI Taxonomy" id="190304"/>
    <lineage>
        <taxon>Bacteria</taxon>
        <taxon>Fusobacteriati</taxon>
        <taxon>Fusobacteriota</taxon>
        <taxon>Fusobacteriia</taxon>
        <taxon>Fusobacteriales</taxon>
        <taxon>Fusobacteriaceae</taxon>
        <taxon>Fusobacterium</taxon>
    </lineage>
</organism>
<reference key="1">
    <citation type="journal article" date="2002" name="J. Bacteriol.">
        <title>Genome sequence and analysis of the oral bacterium Fusobacterium nucleatum strain ATCC 25586.</title>
        <authorList>
            <person name="Kapatral V."/>
            <person name="Anderson I."/>
            <person name="Ivanova N."/>
            <person name="Reznik G."/>
            <person name="Los T."/>
            <person name="Lykidis A."/>
            <person name="Bhattacharyya A."/>
            <person name="Bartman A."/>
            <person name="Gardner W."/>
            <person name="Grechkin G."/>
            <person name="Zhu L."/>
            <person name="Vasieva O."/>
            <person name="Chu L."/>
            <person name="Kogan Y."/>
            <person name="Chaga O."/>
            <person name="Goltsman E."/>
            <person name="Bernal A."/>
            <person name="Larsen N."/>
            <person name="D'Souza M."/>
            <person name="Walunas T."/>
            <person name="Pusch G."/>
            <person name="Haselkorn R."/>
            <person name="Fonstein M."/>
            <person name="Kyrpides N.C."/>
            <person name="Overbeek R."/>
        </authorList>
    </citation>
    <scope>NUCLEOTIDE SEQUENCE [LARGE SCALE GENOMIC DNA]</scope>
    <source>
        <strain>ATCC 25586 / DSM 15643 / BCRC 10681 / CIP 101130 / JCM 8532 / KCTC 2640 / LMG 13131 / VPI 4355</strain>
    </source>
</reference>